<evidence type="ECO:0000250" key="1"/>
<evidence type="ECO:0000255" key="2"/>
<evidence type="ECO:0000305" key="3"/>
<comment type="function">
    <text evidence="1">Exoglycosidase that cleaves the single beta-linked mannose residue from the non-reducing end of beta-mannosidic oligosaccharides of various complexity and length. Involved in the degradation of polymeric mannan and galactomannan (By similarity).</text>
</comment>
<comment type="catalytic activity">
    <reaction>
        <text>Hydrolysis of terminal, non-reducing beta-D-mannose residues in beta-D-mannosides.</text>
        <dbReference type="EC" id="3.2.1.25"/>
    </reaction>
</comment>
<comment type="pathway">
    <text>Glycan metabolism; N-glycan degradation.</text>
</comment>
<comment type="subunit">
    <text evidence="1">Homodimer.</text>
</comment>
<comment type="subcellular location">
    <subcellularLocation>
        <location evidence="1">Secreted</location>
    </subcellularLocation>
</comment>
<comment type="similarity">
    <text evidence="3">Belongs to the glycosyl hydrolase 2 family. Beta-mannosidase A subfamily.</text>
</comment>
<dbReference type="EC" id="3.2.1.25"/>
<dbReference type="EMBL" id="DS027698">
    <property type="protein sequence ID" value="EAW16103.1"/>
    <property type="molecule type" value="Genomic_DNA"/>
</dbReference>
<dbReference type="RefSeq" id="XP_001258000.1">
    <property type="nucleotide sequence ID" value="XM_001257999.1"/>
</dbReference>
<dbReference type="SMR" id="A1DMT2"/>
<dbReference type="STRING" id="331117.A1DMT2"/>
<dbReference type="GlyCosmos" id="A1DMT2">
    <property type="glycosylation" value="16 sites, No reported glycans"/>
</dbReference>
<dbReference type="EnsemblFungi" id="EAW16103">
    <property type="protein sequence ID" value="EAW16103"/>
    <property type="gene ID" value="NFIA_054490"/>
</dbReference>
<dbReference type="GeneID" id="4584515"/>
<dbReference type="KEGG" id="nfi:NFIA_054490"/>
<dbReference type="VEuPathDB" id="FungiDB:NFIA_054490"/>
<dbReference type="eggNOG" id="KOG2230">
    <property type="taxonomic scope" value="Eukaryota"/>
</dbReference>
<dbReference type="HOGENOM" id="CLU_005015_3_0_1"/>
<dbReference type="OMA" id="PWKPAYI"/>
<dbReference type="OrthoDB" id="2866996at2759"/>
<dbReference type="UniPathway" id="UPA00280"/>
<dbReference type="Proteomes" id="UP000006702">
    <property type="component" value="Unassembled WGS sequence"/>
</dbReference>
<dbReference type="GO" id="GO:0005576">
    <property type="term" value="C:extracellular region"/>
    <property type="evidence" value="ECO:0007669"/>
    <property type="project" value="UniProtKB-SubCell"/>
</dbReference>
<dbReference type="GO" id="GO:0004567">
    <property type="term" value="F:beta-mannosidase activity"/>
    <property type="evidence" value="ECO:0007669"/>
    <property type="project" value="UniProtKB-EC"/>
</dbReference>
<dbReference type="GO" id="GO:0006516">
    <property type="term" value="P:glycoprotein catabolic process"/>
    <property type="evidence" value="ECO:0007669"/>
    <property type="project" value="TreeGrafter"/>
</dbReference>
<dbReference type="GO" id="GO:0000272">
    <property type="term" value="P:polysaccharide catabolic process"/>
    <property type="evidence" value="ECO:0007669"/>
    <property type="project" value="UniProtKB-KW"/>
</dbReference>
<dbReference type="FunFam" id="2.60.40.10:FF:001511">
    <property type="entry name" value="Beta-mannosidase A"/>
    <property type="match status" value="1"/>
</dbReference>
<dbReference type="FunFam" id="2.60.40.10:FF:002310">
    <property type="entry name" value="Beta-mannosidase A"/>
    <property type="match status" value="1"/>
</dbReference>
<dbReference type="FunFam" id="3.20.20.80:FF:000084">
    <property type="entry name" value="Beta-mannosidase A"/>
    <property type="match status" value="1"/>
</dbReference>
<dbReference type="Gene3D" id="2.60.120.260">
    <property type="entry name" value="Galactose-binding domain-like"/>
    <property type="match status" value="1"/>
</dbReference>
<dbReference type="Gene3D" id="3.20.20.80">
    <property type="entry name" value="Glycosidases"/>
    <property type="match status" value="1"/>
</dbReference>
<dbReference type="Gene3D" id="2.60.40.10">
    <property type="entry name" value="Immunoglobulins"/>
    <property type="match status" value="3"/>
</dbReference>
<dbReference type="InterPro" id="IPR036156">
    <property type="entry name" value="Beta-gal/glucu_dom_sf"/>
</dbReference>
<dbReference type="InterPro" id="IPR054593">
    <property type="entry name" value="Beta-mannosidase-like_N2"/>
</dbReference>
<dbReference type="InterPro" id="IPR050887">
    <property type="entry name" value="Beta-mannosidase_GH2"/>
</dbReference>
<dbReference type="InterPro" id="IPR041625">
    <property type="entry name" value="Beta-mannosidase_Ig"/>
</dbReference>
<dbReference type="InterPro" id="IPR008979">
    <property type="entry name" value="Galactose-bd-like_sf"/>
</dbReference>
<dbReference type="InterPro" id="IPR006102">
    <property type="entry name" value="Glyco_hydro_2_Ig-like"/>
</dbReference>
<dbReference type="InterPro" id="IPR017853">
    <property type="entry name" value="Glycoside_hydrolase_SF"/>
</dbReference>
<dbReference type="InterPro" id="IPR013783">
    <property type="entry name" value="Ig-like_fold"/>
</dbReference>
<dbReference type="InterPro" id="IPR041447">
    <property type="entry name" value="Mannosidase_ig"/>
</dbReference>
<dbReference type="PANTHER" id="PTHR43730">
    <property type="entry name" value="BETA-MANNOSIDASE"/>
    <property type="match status" value="1"/>
</dbReference>
<dbReference type="PANTHER" id="PTHR43730:SF5">
    <property type="entry name" value="BETA-MANNOSIDASE A"/>
    <property type="match status" value="1"/>
</dbReference>
<dbReference type="Pfam" id="PF00703">
    <property type="entry name" value="Glyco_hydro_2"/>
    <property type="match status" value="1"/>
</dbReference>
<dbReference type="Pfam" id="PF22666">
    <property type="entry name" value="Glyco_hydro_2_N2"/>
    <property type="match status" value="1"/>
</dbReference>
<dbReference type="Pfam" id="PF17753">
    <property type="entry name" value="Ig_mannosidase"/>
    <property type="match status" value="1"/>
</dbReference>
<dbReference type="Pfam" id="PF17786">
    <property type="entry name" value="Mannosidase_ig"/>
    <property type="match status" value="1"/>
</dbReference>
<dbReference type="SUPFAM" id="SSF51445">
    <property type="entry name" value="(Trans)glycosidases"/>
    <property type="match status" value="1"/>
</dbReference>
<dbReference type="SUPFAM" id="SSF49303">
    <property type="entry name" value="beta-Galactosidase/glucuronidase domain"/>
    <property type="match status" value="2"/>
</dbReference>
<dbReference type="SUPFAM" id="SSF49785">
    <property type="entry name" value="Galactose-binding domain-like"/>
    <property type="match status" value="1"/>
</dbReference>
<proteinExistence type="inferred from homology"/>
<feature type="signal peptide" evidence="2">
    <location>
        <begin position="1"/>
        <end position="21"/>
    </location>
</feature>
<feature type="chain" id="PRO_0000394650" description="Beta-mannosidase A">
    <location>
        <begin position="22"/>
        <end position="930"/>
    </location>
</feature>
<feature type="active site" description="Proton donor" evidence="1">
    <location>
        <position position="478"/>
    </location>
</feature>
<feature type="glycosylation site" description="N-linked (GlcNAc...) asparagine" evidence="2">
    <location>
        <position position="62"/>
    </location>
</feature>
<feature type="glycosylation site" description="N-linked (GlcNAc...) asparagine" evidence="2">
    <location>
        <position position="246"/>
    </location>
</feature>
<feature type="glycosylation site" description="N-linked (GlcNAc...) asparagine" evidence="2">
    <location>
        <position position="281"/>
    </location>
</feature>
<feature type="glycosylation site" description="N-linked (GlcNAc...) asparagine" evidence="2">
    <location>
        <position position="315"/>
    </location>
</feature>
<feature type="glycosylation site" description="N-linked (GlcNAc...) asparagine" evidence="2">
    <location>
        <position position="346"/>
    </location>
</feature>
<feature type="glycosylation site" description="N-linked (GlcNAc...) asparagine" evidence="2">
    <location>
        <position position="536"/>
    </location>
</feature>
<feature type="glycosylation site" description="N-linked (GlcNAc...) asparagine" evidence="2">
    <location>
        <position position="607"/>
    </location>
</feature>
<feature type="glycosylation site" description="N-linked (GlcNAc...) asparagine" evidence="2">
    <location>
        <position position="630"/>
    </location>
</feature>
<feature type="glycosylation site" description="N-linked (GlcNAc...) asparagine" evidence="2">
    <location>
        <position position="657"/>
    </location>
</feature>
<feature type="glycosylation site" description="N-linked (GlcNAc...) asparagine" evidence="2">
    <location>
        <position position="737"/>
    </location>
</feature>
<feature type="glycosylation site" description="N-linked (GlcNAc...) asparagine" evidence="2">
    <location>
        <position position="760"/>
    </location>
</feature>
<feature type="glycosylation site" description="N-linked (GlcNAc...) asparagine" evidence="2">
    <location>
        <position position="782"/>
    </location>
</feature>
<feature type="glycosylation site" description="N-linked (GlcNAc...) asparagine" evidence="2">
    <location>
        <position position="789"/>
    </location>
</feature>
<feature type="glycosylation site" description="N-linked (GlcNAc...) asparagine" evidence="2">
    <location>
        <position position="797"/>
    </location>
</feature>
<feature type="glycosylation site" description="N-linked (GlcNAc...) asparagine" evidence="2">
    <location>
        <position position="823"/>
    </location>
</feature>
<feature type="glycosylation site" description="N-linked (GlcNAc...) asparagine" evidence="2">
    <location>
        <position position="909"/>
    </location>
</feature>
<accession>A1DMT2</accession>
<gene>
    <name type="primary">mndA</name>
    <name type="ORF">NFIA_054490</name>
</gene>
<name>MANBA_NEOFI</name>
<protein>
    <recommendedName>
        <fullName>Beta-mannosidase A</fullName>
        <ecNumber>3.2.1.25</ecNumber>
    </recommendedName>
    <alternativeName>
        <fullName>Mannanase A</fullName>
        <shortName>Mannase A</shortName>
    </alternativeName>
</protein>
<sequence>MHVKAETVLALLTPGLPSVVGQHVVDLSGDGWTLSSTALDRTVPGHLPSQVHLDLFEAGVINITASMILTFVGLLMPIGRIPATRLKACDLENFESTWLVFDGLDTFTTITFCDQHVGSTDNQFRQYHFDVSQILKECKQDPVIRINFGSAPSIANAIAKSPDAEEWPPGVQITNEYPNRWYIRKEQSDFGWDWGPAFAPVGPWKPSYIVQNNHAELYVLNTDLDFYRQGQINYLPPDQSQPWIVNASIDILGPVPWKPSMSIEIKDAATGSVLSSGLLQNVTVSGNSITGTTTIDGDAPKLWWPSGMGEQNLYNVTVTVQNDKKKSLAKVTKRTGFRTIFLNQRNITDDQLAQGIAPGANWHFEINGHAFYAKGSNIIPPDAFWPRVTQARMARLFDAVTAGNQNMLRVWASGAYLHDFIYDLADEKGILLWSEFQFSDALYPVNDAFLENVAAEVVYNVRRVNHHPSLALWAGGNEIESLMLPMVKRADPTGYSKYVGEYEKLYISLILPLVYENTRSITYSPSSTTEGYLYVNLSAPVPMAERYSNTTPGSYYGDTDYYNYDTSVSFDYNHYPVGRFANEFGFHSMPSLQTWQQAVDPEDLHFNSSVVMLRNHHYTAGGLFTDNFKNSSKGMGEMTMGVEAYYPIPSKSDSVANFSAWCHATQLFQADMYKSQIQFYRRGSGMPERQLGSLYWQLEDIWQAPTWAGIEYDGRWKVLHYVARDIYQPIIVSPFWNYTTGRLEVYVTSDLWEPAQGTVNLTWVDLSGKTIANNAGTPETVNFTVGALNTTNIYTTNISELSLPDLKDSILILSLSGEGRLPNTSSKKAFVHQNHFTPVFPKDLSLKDPKLEISYSPESRKFTVQATGGVSLYTWLDYPAGAVGYFEENAFVLLPGVQKEVSFAAQEGNVTDDWVRRVTVQSLWDQKVRD</sequence>
<reference key="1">
    <citation type="journal article" date="2008" name="PLoS Genet.">
        <title>Genomic islands in the pathogenic filamentous fungus Aspergillus fumigatus.</title>
        <authorList>
            <person name="Fedorova N.D."/>
            <person name="Khaldi N."/>
            <person name="Joardar V.S."/>
            <person name="Maiti R."/>
            <person name="Amedeo P."/>
            <person name="Anderson M.J."/>
            <person name="Crabtree J."/>
            <person name="Silva J.C."/>
            <person name="Badger J.H."/>
            <person name="Albarraq A."/>
            <person name="Angiuoli S."/>
            <person name="Bussey H."/>
            <person name="Bowyer P."/>
            <person name="Cotty P.J."/>
            <person name="Dyer P.S."/>
            <person name="Egan A."/>
            <person name="Galens K."/>
            <person name="Fraser-Liggett C.M."/>
            <person name="Haas B.J."/>
            <person name="Inman J.M."/>
            <person name="Kent R."/>
            <person name="Lemieux S."/>
            <person name="Malavazi I."/>
            <person name="Orvis J."/>
            <person name="Roemer T."/>
            <person name="Ronning C.M."/>
            <person name="Sundaram J.P."/>
            <person name="Sutton G."/>
            <person name="Turner G."/>
            <person name="Venter J.C."/>
            <person name="White O.R."/>
            <person name="Whitty B.R."/>
            <person name="Youngman P."/>
            <person name="Wolfe K.H."/>
            <person name="Goldman G.H."/>
            <person name="Wortman J.R."/>
            <person name="Jiang B."/>
            <person name="Denning D.W."/>
            <person name="Nierman W.C."/>
        </authorList>
    </citation>
    <scope>NUCLEOTIDE SEQUENCE [LARGE SCALE GENOMIC DNA]</scope>
    <source>
        <strain>ATCC 1020 / DSM 3700 / CBS 544.65 / FGSC A1164 / JCM 1740 / NRRL 181 / WB 181</strain>
    </source>
</reference>
<organism>
    <name type="scientific">Neosartorya fischeri (strain ATCC 1020 / DSM 3700 / CBS 544.65 / FGSC A1164 / JCM 1740 / NRRL 181 / WB 181)</name>
    <name type="common">Aspergillus fischerianus</name>
    <dbReference type="NCBI Taxonomy" id="331117"/>
    <lineage>
        <taxon>Eukaryota</taxon>
        <taxon>Fungi</taxon>
        <taxon>Dikarya</taxon>
        <taxon>Ascomycota</taxon>
        <taxon>Pezizomycotina</taxon>
        <taxon>Eurotiomycetes</taxon>
        <taxon>Eurotiomycetidae</taxon>
        <taxon>Eurotiales</taxon>
        <taxon>Aspergillaceae</taxon>
        <taxon>Aspergillus</taxon>
        <taxon>Aspergillus subgen. Fumigati</taxon>
    </lineage>
</organism>
<keyword id="KW-0119">Carbohydrate metabolism</keyword>
<keyword id="KW-0325">Glycoprotein</keyword>
<keyword id="KW-0326">Glycosidase</keyword>
<keyword id="KW-0378">Hydrolase</keyword>
<keyword id="KW-0624">Polysaccharide degradation</keyword>
<keyword id="KW-1185">Reference proteome</keyword>
<keyword id="KW-0964">Secreted</keyword>
<keyword id="KW-0732">Signal</keyword>